<name>UTS1_CATCO</name>
<keyword id="KW-0027">Amidation</keyword>
<keyword id="KW-0903">Direct protein sequencing</keyword>
<keyword id="KW-0372">Hormone</keyword>
<keyword id="KW-0964">Secreted</keyword>
<comment type="function">
    <text>Urotensin is found in the teleost caudal neurosecretory system. It has a suggested role in osmoregulation and as a corticotropin-releasing factor.</text>
</comment>
<comment type="subcellular location">
    <subcellularLocation>
        <location>Secreted</location>
    </subcellularLocation>
</comment>
<comment type="similarity">
    <text evidence="2">Belongs to the sauvagine/corticotropin-releasing factor/urotensin I family.</text>
</comment>
<accession>P01145</accession>
<evidence type="ECO:0000269" key="1">
    <source>
    </source>
</evidence>
<evidence type="ECO:0000305" key="2"/>
<proteinExistence type="evidence at protein level"/>
<organism>
    <name type="scientific">Catostomus commersonii</name>
    <name type="common">White sucker</name>
    <name type="synonym">Cyprinus commersonnii</name>
    <dbReference type="NCBI Taxonomy" id="7971"/>
    <lineage>
        <taxon>Eukaryota</taxon>
        <taxon>Metazoa</taxon>
        <taxon>Chordata</taxon>
        <taxon>Craniata</taxon>
        <taxon>Vertebrata</taxon>
        <taxon>Euteleostomi</taxon>
        <taxon>Actinopterygii</taxon>
        <taxon>Neopterygii</taxon>
        <taxon>Teleostei</taxon>
        <taxon>Ostariophysi</taxon>
        <taxon>Cypriniformes</taxon>
        <taxon>Catostomoidei</taxon>
        <taxon>Catostomidae</taxon>
        <taxon>Catostomus</taxon>
    </lineage>
</organism>
<protein>
    <recommendedName>
        <fullName>Urotensin-1</fullName>
    </recommendedName>
    <alternativeName>
        <fullName>Urotensin I</fullName>
    </alternativeName>
</protein>
<sequence>NDDPPISIDLTFHLLRNMIEMARIENEREQAGLNRKYLDEV</sequence>
<feature type="chain" id="PRO_0000221024" description="Urotensin-1">
    <location>
        <begin position="1"/>
        <end position="41"/>
    </location>
</feature>
<feature type="modified residue" description="Valine amide" evidence="1">
    <location>
        <position position="41"/>
    </location>
</feature>
<dbReference type="PIR" id="A94267">
    <property type="entry name" value="UOCC1M"/>
</dbReference>
<dbReference type="SMR" id="P01145"/>
<dbReference type="GO" id="GO:0005576">
    <property type="term" value="C:extracellular region"/>
    <property type="evidence" value="ECO:0007669"/>
    <property type="project" value="UniProtKB-SubCell"/>
</dbReference>
<dbReference type="GO" id="GO:0005179">
    <property type="term" value="F:hormone activity"/>
    <property type="evidence" value="ECO:0007669"/>
    <property type="project" value="UniProtKB-KW"/>
</dbReference>
<dbReference type="Gene3D" id="6.10.250.1920">
    <property type="match status" value="1"/>
</dbReference>
<dbReference type="InterPro" id="IPR018446">
    <property type="entry name" value="Corticotropin-releasing_fac_CS"/>
</dbReference>
<dbReference type="InterPro" id="IPR000187">
    <property type="entry name" value="CRF"/>
</dbReference>
<dbReference type="InterPro" id="IPR003620">
    <property type="entry name" value="Urocortin_CRF"/>
</dbReference>
<dbReference type="PANTHER" id="PTHR15035">
    <property type="entry name" value="CORTICOLIBERIN/UROCORTIN"/>
    <property type="match status" value="1"/>
</dbReference>
<dbReference type="PANTHER" id="PTHR15035:SF11">
    <property type="entry name" value="UROCORTIN"/>
    <property type="match status" value="1"/>
</dbReference>
<dbReference type="Pfam" id="PF00473">
    <property type="entry name" value="CRF"/>
    <property type="match status" value="1"/>
</dbReference>
<dbReference type="PRINTS" id="PR01612">
    <property type="entry name" value="CRFFAMILY"/>
</dbReference>
<dbReference type="SMART" id="SM00039">
    <property type="entry name" value="CRF"/>
    <property type="match status" value="1"/>
</dbReference>
<dbReference type="PROSITE" id="PS00511">
    <property type="entry name" value="CRF"/>
    <property type="match status" value="1"/>
</dbReference>
<reference key="1">
    <citation type="journal article" date="1982" name="Science">
        <title>Complete amino acid sequence of urotensin I, a hypotensive and corticotropin-releasing neuropeptide from Catostomus.</title>
        <authorList>
            <person name="Lederis K."/>
            <person name="Letter A."/>
            <person name="McMaster D."/>
            <person name="Moore G."/>
            <person name="Schlesinger D."/>
        </authorList>
    </citation>
    <scope>PROTEIN SEQUENCE</scope>
    <scope>AMIDATION AT VAL-41</scope>
</reference>
<reference key="2">
    <citation type="journal article" date="1983" name="Can. J. Biochem. Cell Biol.">
        <title>Isolation, analysis of structure, synthesis, and biological actions of urotensin I neuropeptides.</title>
        <authorList>
            <person name="Lederis K."/>
            <person name="Letter A."/>
            <person name="McMaster D."/>
            <person name="Ichikawa T."/>
            <person name="McCannell K.L."/>
            <person name="Rivier J."/>
            <person name="Rivier C."/>
            <person name="Vale W."/>
            <person name="Fryer J."/>
            <person name="Kobayashi Y."/>
        </authorList>
    </citation>
    <scope>PROTEIN SEQUENCE</scope>
</reference>